<name>EXP23_ARATH</name>
<keyword id="KW-0134">Cell wall</keyword>
<keyword id="KW-0961">Cell wall biogenesis/degradation</keyword>
<keyword id="KW-0472">Membrane</keyword>
<keyword id="KW-1185">Reference proteome</keyword>
<keyword id="KW-0964">Secreted</keyword>
<keyword id="KW-0732">Signal</keyword>
<dbReference type="EMBL" id="AB010694">
    <property type="protein sequence ID" value="BAB09383.1"/>
    <property type="status" value="ALT_INIT"/>
    <property type="molecule type" value="Genomic_DNA"/>
</dbReference>
<dbReference type="EMBL" id="CP002688">
    <property type="protein sequence ID" value="AED94415.2"/>
    <property type="molecule type" value="Genomic_DNA"/>
</dbReference>
<dbReference type="EMBL" id="DQ056699">
    <property type="protein sequence ID" value="AAY78845.1"/>
    <property type="molecule type" value="mRNA"/>
</dbReference>
<dbReference type="RefSeq" id="NP_198744.2">
    <property type="nucleotide sequence ID" value="NM_123290.2"/>
</dbReference>
<dbReference type="SMR" id="Q9FL79"/>
<dbReference type="STRING" id="3702.Q9FL79"/>
<dbReference type="MetOSite" id="Q9FL79"/>
<dbReference type="PaxDb" id="3702-AT5G39280.1"/>
<dbReference type="EnsemblPlants" id="AT5G39280.1">
    <property type="protein sequence ID" value="AT5G39280.1"/>
    <property type="gene ID" value="AT5G39280"/>
</dbReference>
<dbReference type="GeneID" id="833924"/>
<dbReference type="Gramene" id="AT5G39280.1">
    <property type="protein sequence ID" value="AT5G39280.1"/>
    <property type="gene ID" value="AT5G39280"/>
</dbReference>
<dbReference type="KEGG" id="ath:AT5G39280"/>
<dbReference type="Araport" id="AT5G39280"/>
<dbReference type="TAIR" id="AT5G39280">
    <property type="gene designation" value="EXPA23"/>
</dbReference>
<dbReference type="eggNOG" id="ENOG502QQNJ">
    <property type="taxonomic scope" value="Eukaryota"/>
</dbReference>
<dbReference type="HOGENOM" id="CLU_027462_0_1_1"/>
<dbReference type="InParanoid" id="Q9FL79"/>
<dbReference type="OMA" id="VCANSKW"/>
<dbReference type="PRO" id="PR:Q9FL79"/>
<dbReference type="Proteomes" id="UP000006548">
    <property type="component" value="Chromosome 5"/>
</dbReference>
<dbReference type="ExpressionAtlas" id="Q9FL79">
    <property type="expression patterns" value="baseline and differential"/>
</dbReference>
<dbReference type="GO" id="GO:0005576">
    <property type="term" value="C:extracellular region"/>
    <property type="evidence" value="ECO:0007669"/>
    <property type="project" value="UniProtKB-KW"/>
</dbReference>
<dbReference type="GO" id="GO:0016020">
    <property type="term" value="C:membrane"/>
    <property type="evidence" value="ECO:0007669"/>
    <property type="project" value="UniProtKB-SubCell"/>
</dbReference>
<dbReference type="GO" id="GO:0009653">
    <property type="term" value="P:anatomical structure morphogenesis"/>
    <property type="evidence" value="ECO:0007669"/>
    <property type="project" value="UniProtKB-ARBA"/>
</dbReference>
<dbReference type="GO" id="GO:0009828">
    <property type="term" value="P:plant-type cell wall loosening"/>
    <property type="evidence" value="ECO:0000250"/>
    <property type="project" value="UniProtKB"/>
</dbReference>
<dbReference type="CDD" id="cd22274">
    <property type="entry name" value="DPBB_EXPA_N"/>
    <property type="match status" value="1"/>
</dbReference>
<dbReference type="Gene3D" id="2.60.40.760">
    <property type="entry name" value="Expansin, cellulose-binding-like domain"/>
    <property type="match status" value="1"/>
</dbReference>
<dbReference type="Gene3D" id="2.40.40.10">
    <property type="entry name" value="RlpA-like domain"/>
    <property type="match status" value="1"/>
</dbReference>
<dbReference type="InterPro" id="IPR007118">
    <property type="entry name" value="Expan_Lol_pI"/>
</dbReference>
<dbReference type="InterPro" id="IPR002963">
    <property type="entry name" value="Expansin"/>
</dbReference>
<dbReference type="InterPro" id="IPR007112">
    <property type="entry name" value="Expansin/allergen_DPBB_dom"/>
</dbReference>
<dbReference type="InterPro" id="IPR007117">
    <property type="entry name" value="Expansin_CBD"/>
</dbReference>
<dbReference type="InterPro" id="IPR036749">
    <property type="entry name" value="Expansin_CBD_sf"/>
</dbReference>
<dbReference type="InterPro" id="IPR009009">
    <property type="entry name" value="RlpA-like_DPBB"/>
</dbReference>
<dbReference type="InterPro" id="IPR036908">
    <property type="entry name" value="RlpA-like_sf"/>
</dbReference>
<dbReference type="PANTHER" id="PTHR31867">
    <property type="entry name" value="EXPANSIN-A15"/>
    <property type="match status" value="1"/>
</dbReference>
<dbReference type="Pfam" id="PF03330">
    <property type="entry name" value="DPBB_1"/>
    <property type="match status" value="1"/>
</dbReference>
<dbReference type="Pfam" id="PF01357">
    <property type="entry name" value="Expansin_C"/>
    <property type="match status" value="1"/>
</dbReference>
<dbReference type="PRINTS" id="PR01226">
    <property type="entry name" value="EXPANSIN"/>
</dbReference>
<dbReference type="PRINTS" id="PR01225">
    <property type="entry name" value="EXPANSNFAMLY"/>
</dbReference>
<dbReference type="SMART" id="SM00837">
    <property type="entry name" value="DPBB_1"/>
    <property type="match status" value="1"/>
</dbReference>
<dbReference type="SUPFAM" id="SSF50685">
    <property type="entry name" value="Barwin-like endoglucanases"/>
    <property type="match status" value="1"/>
</dbReference>
<dbReference type="SUPFAM" id="SSF49590">
    <property type="entry name" value="PHL pollen allergen"/>
    <property type="match status" value="1"/>
</dbReference>
<dbReference type="PROSITE" id="PS50843">
    <property type="entry name" value="EXPANSIN_CBD"/>
    <property type="match status" value="1"/>
</dbReference>
<dbReference type="PROSITE" id="PS50842">
    <property type="entry name" value="EXPANSIN_EG45"/>
    <property type="match status" value="1"/>
</dbReference>
<gene>
    <name type="primary">EXPA23</name>
    <name type="synonym">EXP23</name>
    <name type="ordered locus">At5g39280</name>
    <name type="ORF">K3K3.19</name>
    <name type="ORF">K3K3_130</name>
</gene>
<evidence type="ECO:0000250" key="1"/>
<evidence type="ECO:0000255" key="2"/>
<evidence type="ECO:0000255" key="3">
    <source>
        <dbReference type="PROSITE-ProRule" id="PRU00078"/>
    </source>
</evidence>
<evidence type="ECO:0000255" key="4">
    <source>
        <dbReference type="PROSITE-ProRule" id="PRU00079"/>
    </source>
</evidence>
<evidence type="ECO:0000305" key="5"/>
<feature type="signal peptide" evidence="2">
    <location>
        <begin position="1"/>
        <end position="27"/>
    </location>
</feature>
<feature type="chain" id="PRO_0000008703" description="Expansin-A23">
    <location>
        <begin position="28"/>
        <end position="275"/>
    </location>
</feature>
<feature type="domain" description="Expansin-like EG45" evidence="4">
    <location>
        <begin position="72"/>
        <end position="182"/>
    </location>
</feature>
<feature type="domain" description="Expansin-like CBD" evidence="3">
    <location>
        <begin position="192"/>
        <end position="271"/>
    </location>
</feature>
<reference key="1">
    <citation type="journal article" date="1998" name="DNA Res.">
        <title>Structural analysis of Arabidopsis thaliana chromosome 5. V. Sequence features of the regions of 1,381,565 bp covered by twenty one physically assigned P1 and TAC clones.</title>
        <authorList>
            <person name="Kaneko T."/>
            <person name="Kotani H."/>
            <person name="Nakamura Y."/>
            <person name="Sato S."/>
            <person name="Asamizu E."/>
            <person name="Miyajima N."/>
            <person name="Tabata S."/>
        </authorList>
    </citation>
    <scope>NUCLEOTIDE SEQUENCE [LARGE SCALE GENOMIC DNA]</scope>
    <source>
        <strain>cv. Columbia</strain>
    </source>
</reference>
<reference key="2">
    <citation type="journal article" date="2017" name="Plant J.">
        <title>Araport11: a complete reannotation of the Arabidopsis thaliana reference genome.</title>
        <authorList>
            <person name="Cheng C.Y."/>
            <person name="Krishnakumar V."/>
            <person name="Chan A.P."/>
            <person name="Thibaud-Nissen F."/>
            <person name="Schobel S."/>
            <person name="Town C.D."/>
        </authorList>
    </citation>
    <scope>GENOME REANNOTATION</scope>
    <source>
        <strain>cv. Columbia</strain>
    </source>
</reference>
<reference key="3">
    <citation type="submission" date="2005-05" db="EMBL/GenBank/DDBJ databases">
        <authorList>
            <person name="Underwood B.A."/>
            <person name="Xiao Y.-L."/>
            <person name="Moskal W.A. Jr."/>
            <person name="Monaghan E.L."/>
            <person name="Wang W."/>
            <person name="Redman J.C."/>
            <person name="Wu H.C."/>
            <person name="Utterback T."/>
            <person name="Town C.D."/>
        </authorList>
    </citation>
    <scope>NUCLEOTIDE SEQUENCE [LARGE SCALE MRNA] OF 17-275</scope>
    <source>
        <strain>cv. Columbia</strain>
    </source>
</reference>
<reference key="4">
    <citation type="journal article" date="2004" name="Plant Mol. Biol.">
        <title>Nomenclature for members of the expansin superfamily of genes and proteins.</title>
        <authorList>
            <person name="Kende H."/>
            <person name="Bradford K.J."/>
            <person name="Brummell D.A."/>
            <person name="Cho H.-T."/>
            <person name="Cosgrove D.J."/>
            <person name="Fleming A.J."/>
            <person name="Gehring C."/>
            <person name="Lee Y."/>
            <person name="McQueen-Mason S.J."/>
            <person name="Rose J.K.C."/>
            <person name="Voesenek L.A.C."/>
        </authorList>
    </citation>
    <scope>NOMENCLATURE</scope>
</reference>
<comment type="function">
    <text evidence="1">Causes loosening and extension of plant cell walls by disrupting non-covalent bonding between cellulose microfibrils and matrix glucans. No enzymatic activity has been found (By similarity).</text>
</comment>
<comment type="subcellular location">
    <subcellularLocation>
        <location>Secreted</location>
        <location>Cell wall</location>
    </subcellularLocation>
    <subcellularLocation>
        <location>Membrane</location>
        <topology>Peripheral membrane protein</topology>
    </subcellularLocation>
</comment>
<comment type="similarity">
    <text evidence="5">Belongs to the expansin family. Expansin A subfamily.</text>
</comment>
<comment type="sequence caution" evidence="5">
    <conflict type="erroneous initiation">
        <sequence resource="EMBL-CDS" id="BAB09383"/>
    </conflict>
    <text>Truncated N-terminus.</text>
</comment>
<comment type="online information" name="EXPANSIN homepage">
    <link uri="https://www.dept.psu.edu/biology/groups/expansins/index.htm"/>
</comment>
<protein>
    <recommendedName>
        <fullName>Expansin-A23</fullName>
        <shortName>AtEXPA23</shortName>
    </recommendedName>
    <alternativeName>
        <fullName>Alpha-expansin-23</fullName>
        <shortName>At-EXP23</shortName>
        <shortName>AtEx23</shortName>
    </alternativeName>
    <alternativeName>
        <fullName>Ath-ExpAlpha-1.17</fullName>
    </alternativeName>
</protein>
<sequence length="275" mass="30316">MNLLGKMIYVEGFMMIMATLLVSMSYGHRAMINDVAEAPVFDDVVSPNGLDSSWYDARATFYGDIHGGETQQGACGYGDLFKQGYGLETAALSTALFNEGYTCGACYQIMCVNDPQWCLPGSVKITATNFCPPDYSKTEGVWCNPPQKHFDLSLPMFLKIAQYKAGVVPVKYRRISCARTGGVKFETKGNPYFLMILPYNVGGAGDIKLMQVKGDKTGWITMQKNWGQNWTTGVNLTGQGISFRVTTSDGVTKDFNNVMPNNWGFGQTFDGKINF</sequence>
<accession>Q9FL79</accession>
<accession>F4KD31</accession>
<accession>Q4PSD7</accession>
<proteinExistence type="evidence at transcript level"/>
<organism>
    <name type="scientific">Arabidopsis thaliana</name>
    <name type="common">Mouse-ear cress</name>
    <dbReference type="NCBI Taxonomy" id="3702"/>
    <lineage>
        <taxon>Eukaryota</taxon>
        <taxon>Viridiplantae</taxon>
        <taxon>Streptophyta</taxon>
        <taxon>Embryophyta</taxon>
        <taxon>Tracheophyta</taxon>
        <taxon>Spermatophyta</taxon>
        <taxon>Magnoliopsida</taxon>
        <taxon>eudicotyledons</taxon>
        <taxon>Gunneridae</taxon>
        <taxon>Pentapetalae</taxon>
        <taxon>rosids</taxon>
        <taxon>malvids</taxon>
        <taxon>Brassicales</taxon>
        <taxon>Brassicaceae</taxon>
        <taxon>Camelineae</taxon>
        <taxon>Arabidopsis</taxon>
    </lineage>
</organism>